<comment type="function">
    <text evidence="2 3">Catalyzes the NAD(P)H-dependent reduction of imine double bonds of a number of cyclic ketimine substrates, including sulfur-containing cyclic ketimines. Under physiological conditions, it efficiently catalyzes delta(1)-piperideine-2-carboxylate (P2C) and delta(1)-pyrroline-2-carboxylate (Pyr2C) reduction, suggesting a central role in lysine and glutamate metabolism. Additional substrates are delta(2)-thiazoline-2-carboxylate (T2C), 3,4-dehydrothiomorpholine-3-carboxylate (AECK), and (R)-lanthionine ketimine (LK) that is reduced at very low rate compared to other substrates (By similarity). Also catalyzes the NAD(P)H-dependent reduction of (S)-cystathionine ketimine (CysK) (By similarity).</text>
</comment>
<comment type="catalytic activity">
    <reaction evidence="2">
        <text>L-pipecolate + NADP(+) = Delta(1)-piperideine-2-carboxylate + NADPH + H(+)</text>
        <dbReference type="Rhea" id="RHEA:12524"/>
        <dbReference type="ChEBI" id="CHEBI:15378"/>
        <dbReference type="ChEBI" id="CHEBI:57783"/>
        <dbReference type="ChEBI" id="CHEBI:58349"/>
        <dbReference type="ChEBI" id="CHEBI:61185"/>
        <dbReference type="ChEBI" id="CHEBI:77631"/>
        <dbReference type="EC" id="1.5.1.1"/>
    </reaction>
    <physiologicalReaction direction="right-to-left" evidence="2">
        <dbReference type="Rhea" id="RHEA:12526"/>
    </physiologicalReaction>
</comment>
<comment type="catalytic activity">
    <reaction evidence="3">
        <text>L-pipecolate + NAD(+) = Delta(1)-piperideine-2-carboxylate + NADH + H(+)</text>
        <dbReference type="Rhea" id="RHEA:30807"/>
        <dbReference type="ChEBI" id="CHEBI:15378"/>
        <dbReference type="ChEBI" id="CHEBI:57540"/>
        <dbReference type="ChEBI" id="CHEBI:57945"/>
        <dbReference type="ChEBI" id="CHEBI:61185"/>
        <dbReference type="ChEBI" id="CHEBI:77631"/>
        <dbReference type="EC" id="1.5.1.1"/>
    </reaction>
    <physiologicalReaction direction="right-to-left" evidence="3">
        <dbReference type="Rhea" id="RHEA:30809"/>
    </physiologicalReaction>
</comment>
<comment type="catalytic activity">
    <reaction evidence="2">
        <text>L-proline + NADP(+) = 1-pyrroline-2-carboxylate + NADPH + H(+)</text>
        <dbReference type="Rhea" id="RHEA:20317"/>
        <dbReference type="ChEBI" id="CHEBI:15378"/>
        <dbReference type="ChEBI" id="CHEBI:39785"/>
        <dbReference type="ChEBI" id="CHEBI:57783"/>
        <dbReference type="ChEBI" id="CHEBI:58349"/>
        <dbReference type="ChEBI" id="CHEBI:60039"/>
        <dbReference type="EC" id="1.5.1.1"/>
    </reaction>
    <physiologicalReaction direction="right-to-left" evidence="2">
        <dbReference type="Rhea" id="RHEA:20319"/>
    </physiologicalReaction>
</comment>
<comment type="catalytic activity">
    <reaction evidence="2">
        <text>L-proline + NAD(+) = 1-pyrroline-2-carboxylate + NADH + H(+)</text>
        <dbReference type="Rhea" id="RHEA:20321"/>
        <dbReference type="ChEBI" id="CHEBI:15378"/>
        <dbReference type="ChEBI" id="CHEBI:39785"/>
        <dbReference type="ChEBI" id="CHEBI:57540"/>
        <dbReference type="ChEBI" id="CHEBI:57945"/>
        <dbReference type="ChEBI" id="CHEBI:60039"/>
        <dbReference type="EC" id="1.5.1.1"/>
    </reaction>
    <physiologicalReaction direction="right-to-left" evidence="2">
        <dbReference type="Rhea" id="RHEA:20323"/>
    </physiologicalReaction>
</comment>
<comment type="catalytic activity">
    <reaction evidence="2">
        <text>(3R)-1,4-thiomorpholine-3-carboxylate + NAD(+) = 3,4-dehydrothiomorpholine-3-carboxylate + NADH + 2 H(+)</text>
        <dbReference type="Rhea" id="RHEA:12504"/>
        <dbReference type="ChEBI" id="CHEBI:15378"/>
        <dbReference type="ChEBI" id="CHEBI:57540"/>
        <dbReference type="ChEBI" id="CHEBI:57945"/>
        <dbReference type="ChEBI" id="CHEBI:58517"/>
        <dbReference type="ChEBI" id="CHEBI:176873"/>
        <dbReference type="EC" id="1.5.1.25"/>
    </reaction>
    <physiologicalReaction direction="right-to-left" evidence="2">
        <dbReference type="Rhea" id="RHEA:12506"/>
    </physiologicalReaction>
</comment>
<comment type="catalytic activity">
    <reaction evidence="2">
        <text>(3R)-1,4-thiomorpholine-3-carboxylate + NADP(+) = 3,4-dehydrothiomorpholine-3-carboxylate + NADPH + 2 H(+)</text>
        <dbReference type="Rhea" id="RHEA:12500"/>
        <dbReference type="ChEBI" id="CHEBI:15378"/>
        <dbReference type="ChEBI" id="CHEBI:57783"/>
        <dbReference type="ChEBI" id="CHEBI:58349"/>
        <dbReference type="ChEBI" id="CHEBI:58517"/>
        <dbReference type="ChEBI" id="CHEBI:176873"/>
        <dbReference type="EC" id="1.5.1.25"/>
    </reaction>
    <physiologicalReaction direction="right-to-left" evidence="2">
        <dbReference type="Rhea" id="RHEA:12502"/>
    </physiologicalReaction>
</comment>
<comment type="catalytic activity">
    <reaction evidence="3">
        <text>(S)-cystathionine ketimine + NADH + 2 H(+) = (3R,5S)-2,3,5,6,7-pentahydro-1,4-thiazepine-3,5-dicarboxylate + NAD(+)</text>
        <dbReference type="Rhea" id="RHEA:68032"/>
        <dbReference type="ChEBI" id="CHEBI:15378"/>
        <dbReference type="ChEBI" id="CHEBI:57540"/>
        <dbReference type="ChEBI" id="CHEBI:57945"/>
        <dbReference type="ChEBI" id="CHEBI:176808"/>
        <dbReference type="ChEBI" id="CHEBI:176810"/>
    </reaction>
    <physiologicalReaction direction="left-to-right" evidence="3">
        <dbReference type="Rhea" id="RHEA:68033"/>
    </physiologicalReaction>
</comment>
<comment type="catalytic activity">
    <reaction evidence="3">
        <text>(S)-cystathionine ketimine + NADPH + 2 H(+) = (3R,5S)-2,3,5,6,7-pentahydro-1,4-thiazepine-3,5-dicarboxylate + NADP(+)</text>
        <dbReference type="Rhea" id="RHEA:68036"/>
        <dbReference type="ChEBI" id="CHEBI:15378"/>
        <dbReference type="ChEBI" id="CHEBI:57783"/>
        <dbReference type="ChEBI" id="CHEBI:58349"/>
        <dbReference type="ChEBI" id="CHEBI:176808"/>
        <dbReference type="ChEBI" id="CHEBI:176810"/>
    </reaction>
    <physiologicalReaction direction="left-to-right" evidence="3">
        <dbReference type="Rhea" id="RHEA:68037"/>
    </physiologicalReaction>
</comment>
<comment type="catalytic activity">
    <reaction evidence="2">
        <text>(R)-lanthionine ketimine + NADPH + 2 H(+) = (3R,5R)-1,4-thiomorpholine-3,5-dicarboxylate + NADP(+)</text>
        <dbReference type="Rhea" id="RHEA:68040"/>
        <dbReference type="ChEBI" id="CHEBI:15378"/>
        <dbReference type="ChEBI" id="CHEBI:57783"/>
        <dbReference type="ChEBI" id="CHEBI:58349"/>
        <dbReference type="ChEBI" id="CHEBI:176891"/>
        <dbReference type="ChEBI" id="CHEBI:176892"/>
    </reaction>
    <physiologicalReaction direction="left-to-right" evidence="2">
        <dbReference type="Rhea" id="RHEA:68041"/>
    </physiologicalReaction>
</comment>
<comment type="catalytic activity">
    <reaction evidence="2">
        <text>Delta(2)-thiazoline-2-carboxylate + NADPH + 2 H(+) = L-thiazolidine-2-carboxylate + NADP(+)</text>
        <dbReference type="Rhea" id="RHEA:68072"/>
        <dbReference type="ChEBI" id="CHEBI:15378"/>
        <dbReference type="ChEBI" id="CHEBI:57783"/>
        <dbReference type="ChEBI" id="CHEBI:58349"/>
        <dbReference type="ChEBI" id="CHEBI:176895"/>
        <dbReference type="ChEBI" id="CHEBI:176896"/>
    </reaction>
    <physiologicalReaction direction="left-to-right" evidence="2">
        <dbReference type="Rhea" id="RHEA:68073"/>
    </physiologicalReaction>
</comment>
<comment type="subunit">
    <text evidence="2">Homodimer (By similarity). Binds the thyroid hormone triiodothyronine (T3); T3 binding inhibits enzymatic activity.</text>
</comment>
<comment type="subcellular location">
    <subcellularLocation>
        <location evidence="2">Cytoplasm</location>
    </subcellularLocation>
</comment>
<comment type="similarity">
    <text evidence="4">Belongs to the ornithine cyclodeaminase/mu-crystallin family.</text>
</comment>
<feature type="chain" id="PRO_0000200680" description="Ketimine reductase mu-crystallin">
    <location>
        <begin position="1"/>
        <end position="313"/>
    </location>
</feature>
<feature type="binding site" evidence="1">
    <location>
        <position position="47"/>
    </location>
    <ligand>
        <name>3,3',5-triiodo-L-thyronine</name>
        <dbReference type="ChEBI" id="CHEBI:533015"/>
    </ligand>
</feature>
<feature type="binding site" evidence="1">
    <location>
        <position position="90"/>
    </location>
    <ligand>
        <name>NADPH</name>
        <dbReference type="ChEBI" id="CHEBI:57783"/>
    </ligand>
</feature>
<feature type="binding site" evidence="1">
    <location>
        <position position="91"/>
    </location>
    <ligand>
        <name>NADPH</name>
        <dbReference type="ChEBI" id="CHEBI:57783"/>
    </ligand>
</feature>
<feature type="binding site" evidence="1">
    <location>
        <position position="118"/>
    </location>
    <ligand>
        <name>NADPH</name>
        <dbReference type="ChEBI" id="CHEBI:57783"/>
    </ligand>
</feature>
<feature type="binding site" evidence="1">
    <location>
        <position position="143"/>
    </location>
    <ligand>
        <name>NADPH</name>
        <dbReference type="ChEBI" id="CHEBI:57783"/>
    </ligand>
</feature>
<feature type="binding site" evidence="1">
    <location>
        <position position="145"/>
    </location>
    <ligand>
        <name>NADPH</name>
        <dbReference type="ChEBI" id="CHEBI:57783"/>
    </ligand>
</feature>
<feature type="binding site" evidence="1">
    <location>
        <position position="146"/>
    </location>
    <ligand>
        <name>NADPH</name>
        <dbReference type="ChEBI" id="CHEBI:57783"/>
    </ligand>
</feature>
<feature type="binding site" evidence="1">
    <location>
        <position position="167"/>
    </location>
    <ligand>
        <name>NADPH</name>
        <dbReference type="ChEBI" id="CHEBI:57783"/>
    </ligand>
</feature>
<feature type="binding site" evidence="1">
    <location>
        <position position="168"/>
    </location>
    <ligand>
        <name>NADPH</name>
        <dbReference type="ChEBI" id="CHEBI:57783"/>
    </ligand>
</feature>
<feature type="binding site" evidence="1">
    <location>
        <position position="169"/>
    </location>
    <ligand>
        <name>NADPH</name>
        <dbReference type="ChEBI" id="CHEBI:57783"/>
    </ligand>
</feature>
<feature type="binding site" evidence="1">
    <location>
        <position position="172"/>
    </location>
    <ligand>
        <name>NADPH</name>
        <dbReference type="ChEBI" id="CHEBI:57783"/>
    </ligand>
</feature>
<feature type="binding site" evidence="1">
    <location>
        <position position="204"/>
    </location>
    <ligand>
        <name>NADPH</name>
        <dbReference type="ChEBI" id="CHEBI:57783"/>
    </ligand>
</feature>
<feature type="binding site" evidence="1">
    <location>
        <position position="205"/>
    </location>
    <ligand>
        <name>NADPH</name>
        <dbReference type="ChEBI" id="CHEBI:57783"/>
    </ligand>
</feature>
<feature type="binding site" evidence="1">
    <location>
        <position position="225"/>
    </location>
    <ligand>
        <name>NADPH</name>
        <dbReference type="ChEBI" id="CHEBI:57783"/>
    </ligand>
</feature>
<feature type="binding site" evidence="1">
    <location>
        <position position="256"/>
    </location>
    <ligand>
        <name>3,3',5-triiodo-L-thyronine</name>
        <dbReference type="ChEBI" id="CHEBI:533015"/>
    </ligand>
</feature>
<feature type="binding site" evidence="1">
    <location>
        <position position="291"/>
    </location>
    <ligand>
        <name>NADPH</name>
        <dbReference type="ChEBI" id="CHEBI:57783"/>
    </ligand>
</feature>
<organism>
    <name type="scientific">Rattus norvegicus</name>
    <name type="common">Rat</name>
    <dbReference type="NCBI Taxonomy" id="10116"/>
    <lineage>
        <taxon>Eukaryota</taxon>
        <taxon>Metazoa</taxon>
        <taxon>Chordata</taxon>
        <taxon>Craniata</taxon>
        <taxon>Vertebrata</taxon>
        <taxon>Euteleostomi</taxon>
        <taxon>Mammalia</taxon>
        <taxon>Eutheria</taxon>
        <taxon>Euarchontoglires</taxon>
        <taxon>Glires</taxon>
        <taxon>Rodentia</taxon>
        <taxon>Myomorpha</taxon>
        <taxon>Muroidea</taxon>
        <taxon>Muridae</taxon>
        <taxon>Murinae</taxon>
        <taxon>Rattus</taxon>
    </lineage>
</organism>
<keyword id="KW-0963">Cytoplasm</keyword>
<keyword id="KW-0903">Direct protein sequencing</keyword>
<keyword id="KW-0520">NAD</keyword>
<keyword id="KW-0521">NADP</keyword>
<keyword id="KW-0560">Oxidoreductase</keyword>
<keyword id="KW-1185">Reference proteome</keyword>
<dbReference type="EC" id="1.5.1.25" evidence="2"/>
<dbReference type="EC" id="1.5.1.1" evidence="2"/>
<dbReference type="EMBL" id="Y17328">
    <property type="protein sequence ID" value="CAB56625.1"/>
    <property type="molecule type" value="mRNA"/>
</dbReference>
<dbReference type="EMBL" id="BC088121">
    <property type="protein sequence ID" value="AAH88121.1"/>
    <property type="molecule type" value="mRNA"/>
</dbReference>
<dbReference type="RefSeq" id="NP_446407.1">
    <property type="nucleotide sequence ID" value="NM_053955.2"/>
</dbReference>
<dbReference type="SMR" id="Q9QYU4"/>
<dbReference type="BioGRID" id="250625">
    <property type="interactions" value="2"/>
</dbReference>
<dbReference type="FunCoup" id="Q9QYU4">
    <property type="interactions" value="36"/>
</dbReference>
<dbReference type="IntAct" id="Q9QYU4">
    <property type="interactions" value="1"/>
</dbReference>
<dbReference type="MINT" id="Q9QYU4"/>
<dbReference type="STRING" id="10116.ENSRNOP00000073313"/>
<dbReference type="GlyGen" id="Q9QYU4">
    <property type="glycosylation" value="1 site, 1 O-linked glycan (1 site)"/>
</dbReference>
<dbReference type="iPTMnet" id="Q9QYU4"/>
<dbReference type="PhosphoSitePlus" id="Q9QYU4"/>
<dbReference type="PaxDb" id="10116-ENSRNOP00000066476"/>
<dbReference type="Ensembl" id="ENSRNOT00000088482.2">
    <property type="protein sequence ID" value="ENSRNOP00000073313.2"/>
    <property type="gene ID" value="ENSRNOG00000061215.2"/>
</dbReference>
<dbReference type="GeneID" id="117024"/>
<dbReference type="KEGG" id="rno:117024"/>
<dbReference type="AGR" id="RGD:620943"/>
<dbReference type="CTD" id="1428"/>
<dbReference type="RGD" id="620943">
    <property type="gene designation" value="Crym"/>
</dbReference>
<dbReference type="eggNOG" id="KOG3007">
    <property type="taxonomic scope" value="Eukaryota"/>
</dbReference>
<dbReference type="GeneTree" id="ENSGT00390000000237"/>
<dbReference type="InParanoid" id="Q9QYU4"/>
<dbReference type="OrthoDB" id="51914at9989"/>
<dbReference type="PhylomeDB" id="Q9QYU4"/>
<dbReference type="BRENDA" id="1.5.1.21">
    <property type="organism ID" value="5301"/>
</dbReference>
<dbReference type="Reactome" id="R-RNO-71064">
    <property type="pathway name" value="Lysine catabolism"/>
</dbReference>
<dbReference type="PRO" id="PR:Q9QYU4"/>
<dbReference type="Proteomes" id="UP000002494">
    <property type="component" value="Chromosome 1"/>
</dbReference>
<dbReference type="GO" id="GO:0005737">
    <property type="term" value="C:cytoplasm"/>
    <property type="evidence" value="ECO:0000266"/>
    <property type="project" value="RGD"/>
</dbReference>
<dbReference type="GO" id="GO:0005739">
    <property type="term" value="C:mitochondrion"/>
    <property type="evidence" value="ECO:0000266"/>
    <property type="project" value="RGD"/>
</dbReference>
<dbReference type="GO" id="GO:0005634">
    <property type="term" value="C:nucleus"/>
    <property type="evidence" value="ECO:0000266"/>
    <property type="project" value="RGD"/>
</dbReference>
<dbReference type="GO" id="GO:0042562">
    <property type="term" value="F:hormone binding"/>
    <property type="evidence" value="ECO:0000266"/>
    <property type="project" value="RGD"/>
</dbReference>
<dbReference type="GO" id="GO:0050661">
    <property type="term" value="F:NADP binding"/>
    <property type="evidence" value="ECO:0000266"/>
    <property type="project" value="RGD"/>
</dbReference>
<dbReference type="GO" id="GO:0042803">
    <property type="term" value="F:protein homodimerization activity"/>
    <property type="evidence" value="ECO:0000266"/>
    <property type="project" value="RGD"/>
</dbReference>
<dbReference type="GO" id="GO:0047127">
    <property type="term" value="F:thiomorpholine-carboxylate dehydrogenase activity"/>
    <property type="evidence" value="ECO:0000266"/>
    <property type="project" value="RGD"/>
</dbReference>
<dbReference type="GO" id="GO:0070324">
    <property type="term" value="F:thyroid hormone binding"/>
    <property type="evidence" value="ECO:0000266"/>
    <property type="project" value="RGD"/>
</dbReference>
<dbReference type="GO" id="GO:0003714">
    <property type="term" value="F:transcription corepressor activity"/>
    <property type="evidence" value="ECO:0000266"/>
    <property type="project" value="RGD"/>
</dbReference>
<dbReference type="GO" id="GO:0006839">
    <property type="term" value="P:mitochondrial transport"/>
    <property type="evidence" value="ECO:0000314"/>
    <property type="project" value="RGD"/>
</dbReference>
<dbReference type="GO" id="GO:0000122">
    <property type="term" value="P:negative regulation of transcription by RNA polymerase II"/>
    <property type="evidence" value="ECO:0000266"/>
    <property type="project" value="RGD"/>
</dbReference>
<dbReference type="GO" id="GO:0009725">
    <property type="term" value="P:response to hormone"/>
    <property type="evidence" value="ECO:0000270"/>
    <property type="project" value="RGD"/>
</dbReference>
<dbReference type="GO" id="GO:0033280">
    <property type="term" value="P:response to vitamin D"/>
    <property type="evidence" value="ECO:0000270"/>
    <property type="project" value="RGD"/>
</dbReference>
<dbReference type="GO" id="GO:0007605">
    <property type="term" value="P:sensory perception of sound"/>
    <property type="evidence" value="ECO:0000266"/>
    <property type="project" value="RGD"/>
</dbReference>
<dbReference type="GO" id="GO:0042403">
    <property type="term" value="P:thyroid hormone metabolic process"/>
    <property type="evidence" value="ECO:0000266"/>
    <property type="project" value="RGD"/>
</dbReference>
<dbReference type="GO" id="GO:0070327">
    <property type="term" value="P:thyroid hormone transport"/>
    <property type="evidence" value="ECO:0000266"/>
    <property type="project" value="RGD"/>
</dbReference>
<dbReference type="FunFam" id="3.30.1780.10:FF:000001">
    <property type="entry name" value="Ketimine reductase mu-crystallin"/>
    <property type="match status" value="1"/>
</dbReference>
<dbReference type="FunFam" id="3.40.50.720:FF:000241">
    <property type="entry name" value="ketimine reductase mu-crystallin"/>
    <property type="match status" value="1"/>
</dbReference>
<dbReference type="Gene3D" id="3.40.50.720">
    <property type="entry name" value="NAD(P)-binding Rossmann-like Domain"/>
    <property type="match status" value="1"/>
</dbReference>
<dbReference type="Gene3D" id="3.30.1780.10">
    <property type="entry name" value="ornithine cyclodeaminase, domain 1"/>
    <property type="match status" value="1"/>
</dbReference>
<dbReference type="InterPro" id="IPR036291">
    <property type="entry name" value="NAD(P)-bd_dom_sf"/>
</dbReference>
<dbReference type="InterPro" id="IPR003462">
    <property type="entry name" value="ODC_Mu_crystall"/>
</dbReference>
<dbReference type="InterPro" id="IPR023401">
    <property type="entry name" value="ODC_N"/>
</dbReference>
<dbReference type="PANTHER" id="PTHR13812">
    <property type="entry name" value="KETIMINE REDUCTASE MU-CRYSTALLIN"/>
    <property type="match status" value="1"/>
</dbReference>
<dbReference type="PANTHER" id="PTHR13812:SF19">
    <property type="entry name" value="KETIMINE REDUCTASE MU-CRYSTALLIN"/>
    <property type="match status" value="1"/>
</dbReference>
<dbReference type="Pfam" id="PF02423">
    <property type="entry name" value="OCD_Mu_crystall"/>
    <property type="match status" value="1"/>
</dbReference>
<dbReference type="PIRSF" id="PIRSF001439">
    <property type="entry name" value="CryM"/>
    <property type="match status" value="1"/>
</dbReference>
<dbReference type="SUPFAM" id="SSF51735">
    <property type="entry name" value="NAD(P)-binding Rossmann-fold domains"/>
    <property type="match status" value="1"/>
</dbReference>
<evidence type="ECO:0000250" key="1">
    <source>
        <dbReference type="UniProtKB" id="O54983"/>
    </source>
</evidence>
<evidence type="ECO:0000250" key="2">
    <source>
        <dbReference type="UniProtKB" id="Q14894"/>
    </source>
</evidence>
<evidence type="ECO:0000250" key="3">
    <source>
        <dbReference type="UniProtKB" id="Q2KHX6"/>
    </source>
</evidence>
<evidence type="ECO:0000305" key="4"/>
<evidence type="ECO:0000312" key="5">
    <source>
        <dbReference type="RGD" id="620943"/>
    </source>
</evidence>
<name>CRYM_RAT</name>
<sequence>MRRAPAFLSADEVQDHLRSSSLLIPPLEAALANFSKGPDGGVMQPVRTVVPVAKHRGFLGVMPAYSAAEDALTTKLVTFYEGHSNNAVPSHQASVLLFDPSNGSLLAVMDGNVITAKRTAAVSAIATKFLKPPGSDVLCILGAGVQAYSHYEIFTEQFSFKEVRMWNRTRENAEKFASSVQGDVRVCSSVQEAVTGADVIITVTMATEPILFGEWVKPGAHINAVGASRPDWRELDDELMKQAVLYVDSREAALKESGDVLLSGADIFAELGEVVSGAKPAYCEKTTVFKSLGMAVEDLVAAKLVYDSWSSGK</sequence>
<reference key="1">
    <citation type="submission" date="1998-05" db="EMBL/GenBank/DDBJ databases">
        <authorList>
            <person name="Zaidi Q.J."/>
        </authorList>
    </citation>
    <scope>NUCLEOTIDE SEQUENCE [MRNA]</scope>
    <source>
        <strain>GK</strain>
    </source>
</reference>
<reference key="2">
    <citation type="journal article" date="2004" name="Genome Res.">
        <title>The status, quality, and expansion of the NIH full-length cDNA project: the Mammalian Gene Collection (MGC).</title>
        <authorList>
            <consortium name="The MGC Project Team"/>
        </authorList>
    </citation>
    <scope>NUCLEOTIDE SEQUENCE [LARGE SCALE MRNA]</scope>
    <source>
        <tissue>Liver</tissue>
    </source>
</reference>
<reference key="3">
    <citation type="submission" date="2007-04" db="UniProtKB">
        <authorList>
            <person name="Lubec G."/>
            <person name="Diao W."/>
        </authorList>
    </citation>
    <scope>PROTEIN SEQUENCE OF 57-75</scope>
    <scope>IDENTIFICATION BY MASS SPECTROMETRY</scope>
    <source>
        <strain>Sprague-Dawley</strain>
        <tissue>Hippocampus</tissue>
    </source>
</reference>
<protein>
    <recommendedName>
        <fullName evidence="2">Ketimine reductase mu-crystallin</fullName>
        <ecNumber evidence="2">1.5.1.25</ecNumber>
    </recommendedName>
    <alternativeName>
        <fullName evidence="2">1-piperideine-2-carboxylate/1-pyrroline-2-carboxylate reductase</fullName>
        <shortName evidence="2">P2C/Pyr2C reductase</shortName>
        <ecNumber evidence="2">1.5.1.1</ecNumber>
    </alternativeName>
    <alternativeName>
        <fullName>CDK108</fullName>
    </alternativeName>
    <alternativeName>
        <fullName evidence="2">NADP-regulated thyroid-hormone-binding protein</fullName>
    </alternativeName>
</protein>
<accession>Q9QYU4</accession>
<proteinExistence type="evidence at protein level"/>
<gene>
    <name evidence="5" type="primary">Crym</name>
</gene>